<reference key="1">
    <citation type="journal article" date="2004" name="Nat. Genet.">
        <title>Complete sequencing and characterization of 21,243 full-length human cDNAs.</title>
        <authorList>
            <person name="Ota T."/>
            <person name="Suzuki Y."/>
            <person name="Nishikawa T."/>
            <person name="Otsuki T."/>
            <person name="Sugiyama T."/>
            <person name="Irie R."/>
            <person name="Wakamatsu A."/>
            <person name="Hayashi K."/>
            <person name="Sato H."/>
            <person name="Nagai K."/>
            <person name="Kimura K."/>
            <person name="Makita H."/>
            <person name="Sekine M."/>
            <person name="Obayashi M."/>
            <person name="Nishi T."/>
            <person name="Shibahara T."/>
            <person name="Tanaka T."/>
            <person name="Ishii S."/>
            <person name="Yamamoto J."/>
            <person name="Saito K."/>
            <person name="Kawai Y."/>
            <person name="Isono Y."/>
            <person name="Nakamura Y."/>
            <person name="Nagahari K."/>
            <person name="Murakami K."/>
            <person name="Yasuda T."/>
            <person name="Iwayanagi T."/>
            <person name="Wagatsuma M."/>
            <person name="Shiratori A."/>
            <person name="Sudo H."/>
            <person name="Hosoiri T."/>
            <person name="Kaku Y."/>
            <person name="Kodaira H."/>
            <person name="Kondo H."/>
            <person name="Sugawara M."/>
            <person name="Takahashi M."/>
            <person name="Kanda K."/>
            <person name="Yokoi T."/>
            <person name="Furuya T."/>
            <person name="Kikkawa E."/>
            <person name="Omura Y."/>
            <person name="Abe K."/>
            <person name="Kamihara K."/>
            <person name="Katsuta N."/>
            <person name="Sato K."/>
            <person name="Tanikawa M."/>
            <person name="Yamazaki M."/>
            <person name="Ninomiya K."/>
            <person name="Ishibashi T."/>
            <person name="Yamashita H."/>
            <person name="Murakawa K."/>
            <person name="Fujimori K."/>
            <person name="Tanai H."/>
            <person name="Kimata M."/>
            <person name="Watanabe M."/>
            <person name="Hiraoka S."/>
            <person name="Chiba Y."/>
            <person name="Ishida S."/>
            <person name="Ono Y."/>
            <person name="Takiguchi S."/>
            <person name="Watanabe S."/>
            <person name="Yosida M."/>
            <person name="Hotuta T."/>
            <person name="Kusano J."/>
            <person name="Kanehori K."/>
            <person name="Takahashi-Fujii A."/>
            <person name="Hara H."/>
            <person name="Tanase T.-O."/>
            <person name="Nomura Y."/>
            <person name="Togiya S."/>
            <person name="Komai F."/>
            <person name="Hara R."/>
            <person name="Takeuchi K."/>
            <person name="Arita M."/>
            <person name="Imose N."/>
            <person name="Musashino K."/>
            <person name="Yuuki H."/>
            <person name="Oshima A."/>
            <person name="Sasaki N."/>
            <person name="Aotsuka S."/>
            <person name="Yoshikawa Y."/>
            <person name="Matsunawa H."/>
            <person name="Ichihara T."/>
            <person name="Shiohata N."/>
            <person name="Sano S."/>
            <person name="Moriya S."/>
            <person name="Momiyama H."/>
            <person name="Satoh N."/>
            <person name="Takami S."/>
            <person name="Terashima Y."/>
            <person name="Suzuki O."/>
            <person name="Nakagawa S."/>
            <person name="Senoh A."/>
            <person name="Mizoguchi H."/>
            <person name="Goto Y."/>
            <person name="Shimizu F."/>
            <person name="Wakebe H."/>
            <person name="Hishigaki H."/>
            <person name="Watanabe T."/>
            <person name="Sugiyama A."/>
            <person name="Takemoto M."/>
            <person name="Kawakami B."/>
            <person name="Yamazaki M."/>
            <person name="Watanabe K."/>
            <person name="Kumagai A."/>
            <person name="Itakura S."/>
            <person name="Fukuzumi Y."/>
            <person name="Fujimori Y."/>
            <person name="Komiyama M."/>
            <person name="Tashiro H."/>
            <person name="Tanigami A."/>
            <person name="Fujiwara T."/>
            <person name="Ono T."/>
            <person name="Yamada K."/>
            <person name="Fujii Y."/>
            <person name="Ozaki K."/>
            <person name="Hirao M."/>
            <person name="Ohmori Y."/>
            <person name="Kawabata A."/>
            <person name="Hikiji T."/>
            <person name="Kobatake N."/>
            <person name="Inagaki H."/>
            <person name="Ikema Y."/>
            <person name="Okamoto S."/>
            <person name="Okitani R."/>
            <person name="Kawakami T."/>
            <person name="Noguchi S."/>
            <person name="Itoh T."/>
            <person name="Shigeta K."/>
            <person name="Senba T."/>
            <person name="Matsumura K."/>
            <person name="Nakajima Y."/>
            <person name="Mizuno T."/>
            <person name="Morinaga M."/>
            <person name="Sasaki M."/>
            <person name="Togashi T."/>
            <person name="Oyama M."/>
            <person name="Hata H."/>
            <person name="Watanabe M."/>
            <person name="Komatsu T."/>
            <person name="Mizushima-Sugano J."/>
            <person name="Satoh T."/>
            <person name="Shirai Y."/>
            <person name="Takahashi Y."/>
            <person name="Nakagawa K."/>
            <person name="Okumura K."/>
            <person name="Nagase T."/>
            <person name="Nomura N."/>
            <person name="Kikuchi H."/>
            <person name="Masuho Y."/>
            <person name="Yamashita R."/>
            <person name="Nakai K."/>
            <person name="Yada T."/>
            <person name="Nakamura Y."/>
            <person name="Ohara O."/>
            <person name="Isogai T."/>
            <person name="Sugano S."/>
        </authorList>
    </citation>
    <scope>NUCLEOTIDE SEQUENCE [LARGE SCALE MRNA] (ISOFORM 3)</scope>
    <source>
        <tissue>Testis</tissue>
    </source>
</reference>
<reference key="2">
    <citation type="journal article" date="2005" name="Nature">
        <title>Generation and annotation of the DNA sequences of human chromosomes 2 and 4.</title>
        <authorList>
            <person name="Hillier L.W."/>
            <person name="Graves T.A."/>
            <person name="Fulton R.S."/>
            <person name="Fulton L.A."/>
            <person name="Pepin K.H."/>
            <person name="Minx P."/>
            <person name="Wagner-McPherson C."/>
            <person name="Layman D."/>
            <person name="Wylie K."/>
            <person name="Sekhon M."/>
            <person name="Becker M.C."/>
            <person name="Fewell G.A."/>
            <person name="Delehaunty K.D."/>
            <person name="Miner T.L."/>
            <person name="Nash W.E."/>
            <person name="Kremitzki C."/>
            <person name="Oddy L."/>
            <person name="Du H."/>
            <person name="Sun H."/>
            <person name="Bradshaw-Cordum H."/>
            <person name="Ali J."/>
            <person name="Carter J."/>
            <person name="Cordes M."/>
            <person name="Harris A."/>
            <person name="Isak A."/>
            <person name="van Brunt A."/>
            <person name="Nguyen C."/>
            <person name="Du F."/>
            <person name="Courtney L."/>
            <person name="Kalicki J."/>
            <person name="Ozersky P."/>
            <person name="Abbott S."/>
            <person name="Armstrong J."/>
            <person name="Belter E.A."/>
            <person name="Caruso L."/>
            <person name="Cedroni M."/>
            <person name="Cotton M."/>
            <person name="Davidson T."/>
            <person name="Desai A."/>
            <person name="Elliott G."/>
            <person name="Erb T."/>
            <person name="Fronick C."/>
            <person name="Gaige T."/>
            <person name="Haakenson W."/>
            <person name="Haglund K."/>
            <person name="Holmes A."/>
            <person name="Harkins R."/>
            <person name="Kim K."/>
            <person name="Kruchowski S.S."/>
            <person name="Strong C.M."/>
            <person name="Grewal N."/>
            <person name="Goyea E."/>
            <person name="Hou S."/>
            <person name="Levy A."/>
            <person name="Martinka S."/>
            <person name="Mead K."/>
            <person name="McLellan M.D."/>
            <person name="Meyer R."/>
            <person name="Randall-Maher J."/>
            <person name="Tomlinson C."/>
            <person name="Dauphin-Kohlberg S."/>
            <person name="Kozlowicz-Reilly A."/>
            <person name="Shah N."/>
            <person name="Swearengen-Shahid S."/>
            <person name="Snider J."/>
            <person name="Strong J.T."/>
            <person name="Thompson J."/>
            <person name="Yoakum M."/>
            <person name="Leonard S."/>
            <person name="Pearman C."/>
            <person name="Trani L."/>
            <person name="Radionenko M."/>
            <person name="Waligorski J.E."/>
            <person name="Wang C."/>
            <person name="Rock S.M."/>
            <person name="Tin-Wollam A.-M."/>
            <person name="Maupin R."/>
            <person name="Latreille P."/>
            <person name="Wendl M.C."/>
            <person name="Yang S.-P."/>
            <person name="Pohl C."/>
            <person name="Wallis J.W."/>
            <person name="Spieth J."/>
            <person name="Bieri T.A."/>
            <person name="Berkowicz N."/>
            <person name="Nelson J.O."/>
            <person name="Osborne J."/>
            <person name="Ding L."/>
            <person name="Meyer R."/>
            <person name="Sabo A."/>
            <person name="Shotland Y."/>
            <person name="Sinha P."/>
            <person name="Wohldmann P.E."/>
            <person name="Cook L.L."/>
            <person name="Hickenbotham M.T."/>
            <person name="Eldred J."/>
            <person name="Williams D."/>
            <person name="Jones T.A."/>
            <person name="She X."/>
            <person name="Ciccarelli F.D."/>
            <person name="Izaurralde E."/>
            <person name="Taylor J."/>
            <person name="Schmutz J."/>
            <person name="Myers R.M."/>
            <person name="Cox D.R."/>
            <person name="Huang X."/>
            <person name="McPherson J.D."/>
            <person name="Mardis E.R."/>
            <person name="Clifton S.W."/>
            <person name="Warren W.C."/>
            <person name="Chinwalla A.T."/>
            <person name="Eddy S.R."/>
            <person name="Marra M.A."/>
            <person name="Ovcharenko I."/>
            <person name="Furey T.S."/>
            <person name="Miller W."/>
            <person name="Eichler E.E."/>
            <person name="Bork P."/>
            <person name="Suyama M."/>
            <person name="Torrents D."/>
            <person name="Waterston R.H."/>
            <person name="Wilson R.K."/>
        </authorList>
    </citation>
    <scope>NUCLEOTIDE SEQUENCE [LARGE SCALE GENOMIC DNA]</scope>
</reference>
<reference key="3">
    <citation type="submission" date="2005-07" db="EMBL/GenBank/DDBJ databases">
        <authorList>
            <person name="Mural R.J."/>
            <person name="Istrail S."/>
            <person name="Sutton G.G."/>
            <person name="Florea L."/>
            <person name="Halpern A.L."/>
            <person name="Mobarry C.M."/>
            <person name="Lippert R."/>
            <person name="Walenz B."/>
            <person name="Shatkay H."/>
            <person name="Dew I."/>
            <person name="Miller J.R."/>
            <person name="Flanigan M.J."/>
            <person name="Edwards N.J."/>
            <person name="Bolanos R."/>
            <person name="Fasulo D."/>
            <person name="Halldorsson B.V."/>
            <person name="Hannenhalli S."/>
            <person name="Turner R."/>
            <person name="Yooseph S."/>
            <person name="Lu F."/>
            <person name="Nusskern D.R."/>
            <person name="Shue B.C."/>
            <person name="Zheng X.H."/>
            <person name="Zhong F."/>
            <person name="Delcher A.L."/>
            <person name="Huson D.H."/>
            <person name="Kravitz S.A."/>
            <person name="Mouchard L."/>
            <person name="Reinert K."/>
            <person name="Remington K.A."/>
            <person name="Clark A.G."/>
            <person name="Waterman M.S."/>
            <person name="Eichler E.E."/>
            <person name="Adams M.D."/>
            <person name="Hunkapiller M.W."/>
            <person name="Myers E.W."/>
            <person name="Venter J.C."/>
        </authorList>
    </citation>
    <scope>NUCLEOTIDE SEQUENCE [LARGE SCALE GENOMIC DNA]</scope>
</reference>
<reference key="4">
    <citation type="journal article" date="2004" name="Genome Res.">
        <title>The status, quality, and expansion of the NIH full-length cDNA project: the Mammalian Gene Collection (MGC).</title>
        <authorList>
            <consortium name="The MGC Project Team"/>
        </authorList>
    </citation>
    <scope>NUCLEOTIDE SEQUENCE [LARGE SCALE MRNA] (ISOFORM 2)</scope>
    <source>
        <tissue>Ovary</tissue>
    </source>
</reference>
<reference key="5">
    <citation type="journal article" date="2006" name="Cell Cycle">
        <title>DUF1613 is a novel family of eucaryotic AdoMet-dependent methyltransferases.</title>
        <authorList>
            <person name="Knizewski L."/>
            <person name="Ginalski K."/>
        </authorList>
    </citation>
    <scope>POSSIBLE FUNCTION</scope>
</reference>
<reference key="6">
    <citation type="journal article" date="2013" name="J. Proteome Res.">
        <title>Toward a comprehensive characterization of a human cancer cell phosphoproteome.</title>
        <authorList>
            <person name="Zhou H."/>
            <person name="Di Palma S."/>
            <person name="Preisinger C."/>
            <person name="Peng M."/>
            <person name="Polat A.N."/>
            <person name="Heck A.J."/>
            <person name="Mohammed S."/>
        </authorList>
    </citation>
    <scope>PHOSPHORYLATION [LARGE SCALE ANALYSIS] AT SER-78 AND SER-533</scope>
    <scope>IDENTIFICATION BY MASS SPECTROMETRY [LARGE SCALE ANALYSIS]</scope>
    <source>
        <tissue>Cervix carcinoma</tissue>
        <tissue>Erythroleukemia</tissue>
    </source>
</reference>
<reference key="7">
    <citation type="journal article" date="2011" name="Epilepsy Res.">
        <title>Q8IYL2 is a candidate gene for the familial epilepsy syndrome of partial epilepsy with pericentral spikes (PEPS).</title>
        <authorList>
            <person name="Leschziner G.D."/>
            <person name="Coffey A.J."/>
            <person name="Andrew T."/>
            <person name="Gregorio S.P."/>
            <person name="Dias-Neto E."/>
            <person name="Calafato M."/>
            <person name="Bentley D.R."/>
            <person name="Kinton L."/>
            <person name="Sander J.W."/>
            <person name="Johnson M.R."/>
        </authorList>
    </citation>
    <scope>VARIANTS LEU-300; VAL-455 AND ALA-641</scope>
</reference>
<keyword id="KW-0025">Alternative splicing</keyword>
<keyword id="KW-0963">Cytoplasm</keyword>
<keyword id="KW-0479">Metal-binding</keyword>
<keyword id="KW-0489">Methyltransferase</keyword>
<keyword id="KW-0597">Phosphoprotein</keyword>
<keyword id="KW-1267">Proteomics identification</keyword>
<keyword id="KW-1185">Reference proteome</keyword>
<keyword id="KW-0949">S-adenosyl-L-methionine</keyword>
<keyword id="KW-0808">Transferase</keyword>
<keyword id="KW-0819">tRNA processing</keyword>
<keyword id="KW-0862">Zinc</keyword>
<keyword id="KW-0863">Zinc-finger</keyword>
<gene>
    <name type="primary">TRMT44</name>
    <name type="synonym">C4orf23</name>
    <name type="synonym">METTL19</name>
</gene>
<dbReference type="EC" id="2.1.1.211"/>
<dbReference type="EMBL" id="AK093044">
    <property type="protein sequence ID" value="BAC04031.1"/>
    <property type="molecule type" value="mRNA"/>
</dbReference>
<dbReference type="EMBL" id="AC104825">
    <property type="status" value="NOT_ANNOTATED_CDS"/>
    <property type="molecule type" value="Genomic_DNA"/>
</dbReference>
<dbReference type="EMBL" id="AC105345">
    <property type="status" value="NOT_ANNOTATED_CDS"/>
    <property type="molecule type" value="Genomic_DNA"/>
</dbReference>
<dbReference type="EMBL" id="CH471131">
    <property type="protein sequence ID" value="EAW82337.1"/>
    <property type="molecule type" value="Genomic_DNA"/>
</dbReference>
<dbReference type="EMBL" id="BC035655">
    <property type="protein sequence ID" value="AAH35655.1"/>
    <property type="molecule type" value="mRNA"/>
</dbReference>
<dbReference type="CCDS" id="CCDS3402.2">
    <molecule id="Q8IYL2-1"/>
</dbReference>
<dbReference type="RefSeq" id="NP_689757.2">
    <molecule id="Q8IYL2-1"/>
    <property type="nucleotide sequence ID" value="NM_152544.3"/>
</dbReference>
<dbReference type="RefSeq" id="XP_047305634.1">
    <molecule id="Q8IYL2-1"/>
    <property type="nucleotide sequence ID" value="XM_047449678.1"/>
</dbReference>
<dbReference type="BioGRID" id="127475">
    <property type="interactions" value="47"/>
</dbReference>
<dbReference type="FunCoup" id="Q8IYL2">
    <property type="interactions" value="1554"/>
</dbReference>
<dbReference type="IntAct" id="Q8IYL2">
    <property type="interactions" value="31"/>
</dbReference>
<dbReference type="STRING" id="9606.ENSP00000374387"/>
<dbReference type="GlyGen" id="Q8IYL2">
    <property type="glycosylation" value="1 site, 1 O-linked glycan (1 site)"/>
</dbReference>
<dbReference type="iPTMnet" id="Q8IYL2"/>
<dbReference type="PhosphoSitePlus" id="Q8IYL2"/>
<dbReference type="BioMuta" id="TRMT44"/>
<dbReference type="DMDM" id="115311883"/>
<dbReference type="jPOST" id="Q8IYL2"/>
<dbReference type="MassIVE" id="Q8IYL2"/>
<dbReference type="PaxDb" id="9606-ENSP00000374387"/>
<dbReference type="PeptideAtlas" id="Q8IYL2"/>
<dbReference type="ProteomicsDB" id="71195">
    <molecule id="Q8IYL2-1"/>
</dbReference>
<dbReference type="ProteomicsDB" id="71196">
    <molecule id="Q8IYL2-2"/>
</dbReference>
<dbReference type="ProteomicsDB" id="71197">
    <molecule id="Q8IYL2-3"/>
</dbReference>
<dbReference type="Pumba" id="Q8IYL2"/>
<dbReference type="Antibodypedia" id="43421">
    <property type="antibodies" value="29 antibodies from 13 providers"/>
</dbReference>
<dbReference type="DNASU" id="152992"/>
<dbReference type="Ensembl" id="ENST00000389737.5">
    <molecule id="Q8IYL2-1"/>
    <property type="protein sequence ID" value="ENSP00000374387.4"/>
    <property type="gene ID" value="ENSG00000155275.19"/>
</dbReference>
<dbReference type="Ensembl" id="ENST00000513449.6">
    <molecule id="Q8IYL2-2"/>
    <property type="protein sequence ID" value="ENSP00000424643.2"/>
    <property type="gene ID" value="ENSG00000155275.19"/>
</dbReference>
<dbReference type="GeneID" id="152992"/>
<dbReference type="KEGG" id="hsa:152992"/>
<dbReference type="MANE-Select" id="ENST00000389737.5">
    <property type="protein sequence ID" value="ENSP00000374387.4"/>
    <property type="RefSeq nucleotide sequence ID" value="NM_152544.3"/>
    <property type="RefSeq protein sequence ID" value="NP_689757.2"/>
</dbReference>
<dbReference type="UCSC" id="uc003glf.2">
    <molecule id="Q8IYL2-1"/>
    <property type="organism name" value="human"/>
</dbReference>
<dbReference type="AGR" id="HGNC:26653"/>
<dbReference type="CTD" id="152992"/>
<dbReference type="DisGeNET" id="152992"/>
<dbReference type="GeneCards" id="TRMT44"/>
<dbReference type="HGNC" id="HGNC:26653">
    <property type="gene designation" value="TRMT44"/>
</dbReference>
<dbReference type="HPA" id="ENSG00000155275">
    <property type="expression patterns" value="Low tissue specificity"/>
</dbReference>
<dbReference type="MIM" id="614309">
    <property type="type" value="gene"/>
</dbReference>
<dbReference type="neXtProt" id="NX_Q8IYL2"/>
<dbReference type="PharmGKB" id="PA145008869"/>
<dbReference type="VEuPathDB" id="HostDB:ENSG00000155275"/>
<dbReference type="eggNOG" id="KOG3790">
    <property type="taxonomic scope" value="Eukaryota"/>
</dbReference>
<dbReference type="GeneTree" id="ENSGT00390000000645"/>
<dbReference type="HOGENOM" id="CLU_021025_0_0_1"/>
<dbReference type="InParanoid" id="Q8IYL2"/>
<dbReference type="OMA" id="CFFKLHH"/>
<dbReference type="OrthoDB" id="10047021at2759"/>
<dbReference type="PAN-GO" id="Q8IYL2">
    <property type="GO annotations" value="2 GO annotations based on evolutionary models"/>
</dbReference>
<dbReference type="PhylomeDB" id="Q8IYL2"/>
<dbReference type="TreeFam" id="TF106127"/>
<dbReference type="PathwayCommons" id="Q8IYL2"/>
<dbReference type="Reactome" id="R-HSA-6782315">
    <property type="pathway name" value="tRNA modification in the nucleus and cytosol"/>
</dbReference>
<dbReference type="SignaLink" id="Q8IYL2"/>
<dbReference type="BioGRID-ORCS" id="152992">
    <property type="hits" value="7 hits in 1153 CRISPR screens"/>
</dbReference>
<dbReference type="ChiTaRS" id="TRMT44">
    <property type="organism name" value="human"/>
</dbReference>
<dbReference type="GenomeRNAi" id="152992"/>
<dbReference type="Pharos" id="Q8IYL2">
    <property type="development level" value="Tdark"/>
</dbReference>
<dbReference type="PRO" id="PR:Q8IYL2"/>
<dbReference type="Proteomes" id="UP000005640">
    <property type="component" value="Chromosome 4"/>
</dbReference>
<dbReference type="RNAct" id="Q8IYL2">
    <property type="molecule type" value="protein"/>
</dbReference>
<dbReference type="Bgee" id="ENSG00000155275">
    <property type="expression patterns" value="Expressed in left ovary and 99 other cell types or tissues"/>
</dbReference>
<dbReference type="ExpressionAtlas" id="Q8IYL2">
    <property type="expression patterns" value="baseline and differential"/>
</dbReference>
<dbReference type="GO" id="GO:0005737">
    <property type="term" value="C:cytoplasm"/>
    <property type="evidence" value="ECO:0007669"/>
    <property type="project" value="UniProtKB-SubCell"/>
</dbReference>
<dbReference type="GO" id="GO:0016300">
    <property type="term" value="F:tRNA (uridine) methyltransferase activity"/>
    <property type="evidence" value="ECO:0000318"/>
    <property type="project" value="GO_Central"/>
</dbReference>
<dbReference type="GO" id="GO:0141101">
    <property type="term" value="F:tRNA(Ser) (uridine(44)-2'-O-)-methyltransferase activity"/>
    <property type="evidence" value="ECO:0007669"/>
    <property type="project" value="UniProtKB-EC"/>
</dbReference>
<dbReference type="GO" id="GO:0008270">
    <property type="term" value="F:zinc ion binding"/>
    <property type="evidence" value="ECO:0007669"/>
    <property type="project" value="UniProtKB-KW"/>
</dbReference>
<dbReference type="GO" id="GO:0030488">
    <property type="term" value="P:tRNA methylation"/>
    <property type="evidence" value="ECO:0000318"/>
    <property type="project" value="GO_Central"/>
</dbReference>
<dbReference type="InterPro" id="IPR029063">
    <property type="entry name" value="SAM-dependent_MTases_sf"/>
</dbReference>
<dbReference type="InterPro" id="IPR011671">
    <property type="entry name" value="tRNA_uracil_MeTrfase"/>
</dbReference>
<dbReference type="InterPro" id="IPR000571">
    <property type="entry name" value="Znf_CCCH"/>
</dbReference>
<dbReference type="PANTHER" id="PTHR21210">
    <property type="entry name" value="TRNA (URACIL-O(2)-)-METHYLTRANSFERASE-RELATED"/>
    <property type="match status" value="1"/>
</dbReference>
<dbReference type="PANTHER" id="PTHR21210:SF0">
    <property type="entry name" value="TRNA (URACIL-O(2)-)-METHYLTRANSFERASE-RELATED"/>
    <property type="match status" value="1"/>
</dbReference>
<dbReference type="Pfam" id="PF07757">
    <property type="entry name" value="AdoMet_MTase"/>
    <property type="match status" value="1"/>
</dbReference>
<dbReference type="SUPFAM" id="SSF53335">
    <property type="entry name" value="S-adenosyl-L-methionine-dependent methyltransferases"/>
    <property type="match status" value="1"/>
</dbReference>
<dbReference type="PROSITE" id="PS50103">
    <property type="entry name" value="ZF_C3H1"/>
    <property type="match status" value="1"/>
</dbReference>
<sequence length="757" mass="84629">MAEVGRTGISYPGALLPQGFWAAVEVWLERPQVANKRLCGARLEARWSAALPCAEARGPGTSAGSEQKERGPGPGQGSPGGGPGPRSLSGPEQGTACCELEEAQGQCQQEEAQREAASVPLRDSGHPGHAEGREGDFPAADLDSLWEDFSQSLARGNSELLAFLTSSGAGSQPEAQRELDVVLRTVIPKTSPHCPLTTPRREIVVQDVLNGTITFLPLEEDDEGNLKVKMSNVYQIQLSHSKEEWFISVLIFCPERWHSDGIVYPKPTWLGEELLAKLAKWSVENKKSDFKSTLSLISIMKYSKAYQELKEKYKEMVKVWPEVTDPEKFVYEDVAIAAYLLILWEEERAERRLTARQSFVDLGCGNGLLVHILSSEGHPGRGIDVRRRKIWDMYGPQTQLEEDAITPNDKTLFPDVDWLIGNHSDELTPWIPVIAARSSYNCRFFVLPCCFFDFIGRYSRRQSKKTQYREYLDFIKEVGFTCGFHVDEDCLRIPSTKRVCLVGKSRTYPSSREASVDEKRTQYIKSRRGCPVSPPGWELSPSPRWVAAGSAGHCDGQQALDARVGCVTRAWAAEHGAGPQAEGPWLPGFHPREKAERVRNCAALPRDFIDQVVLQVANLLLGGKQLNTRSSRNGSLKTWNGGESLSLAEVANELDTETLRRLKRECGGLQTLLRNSHQVFQVVNGRVHIRDWREETLWKTKQPEAKQRLLSEACKTRLCWFFMHHPDGCALSTDCCPFAHGPAELRPPRTTPRKKIS</sequence>
<organism>
    <name type="scientific">Homo sapiens</name>
    <name type="common">Human</name>
    <dbReference type="NCBI Taxonomy" id="9606"/>
    <lineage>
        <taxon>Eukaryota</taxon>
        <taxon>Metazoa</taxon>
        <taxon>Chordata</taxon>
        <taxon>Craniata</taxon>
        <taxon>Vertebrata</taxon>
        <taxon>Euteleostomi</taxon>
        <taxon>Mammalia</taxon>
        <taxon>Eutheria</taxon>
        <taxon>Euarchontoglires</taxon>
        <taxon>Primates</taxon>
        <taxon>Haplorrhini</taxon>
        <taxon>Catarrhini</taxon>
        <taxon>Hominidae</taxon>
        <taxon>Homo</taxon>
    </lineage>
</organism>
<comment type="function">
    <text evidence="1">Probable adenosyl-L-methionine (AdoMet)-dependent tRNA (uracil-O(2)-)-methyltransferase.</text>
</comment>
<comment type="catalytic activity">
    <reaction>
        <text>uridine(44) in tRNA(Ser) + S-adenosyl-L-methionine = 2'-O-methyluridine(44) in tRNA(Ser) + S-adenosyl-L-homocysteine + H(+)</text>
        <dbReference type="Rhea" id="RHEA:43100"/>
        <dbReference type="Rhea" id="RHEA-COMP:10339"/>
        <dbReference type="Rhea" id="RHEA-COMP:10340"/>
        <dbReference type="ChEBI" id="CHEBI:15378"/>
        <dbReference type="ChEBI" id="CHEBI:57856"/>
        <dbReference type="ChEBI" id="CHEBI:59789"/>
        <dbReference type="ChEBI" id="CHEBI:65315"/>
        <dbReference type="ChEBI" id="CHEBI:74478"/>
        <dbReference type="EC" id="2.1.1.211"/>
    </reaction>
</comment>
<comment type="subcellular location">
    <subcellularLocation>
        <location evidence="7">Cytoplasm</location>
    </subcellularLocation>
</comment>
<comment type="alternative products">
    <event type="alternative splicing"/>
    <isoform>
        <id>Q8IYL2-1</id>
        <name>1</name>
        <sequence type="displayed"/>
    </isoform>
    <isoform>
        <id>Q8IYL2-2</id>
        <name>2</name>
        <sequence type="described" ref="VSP_020589 VSP_020590 VSP_020591 VSP_020592"/>
    </isoform>
    <isoform>
        <id>Q8IYL2-3</id>
        <name>3</name>
        <sequence type="described" ref="VSP_039538"/>
    </isoform>
</comment>
<comment type="similarity">
    <text evidence="7">Belongs to the TRM44 family.</text>
</comment>
<protein>
    <recommendedName>
        <fullName>Probable tRNA (uracil-O(2)-)-methyltransferase</fullName>
        <ecNumber>2.1.1.211</ecNumber>
    </recommendedName>
    <alternativeName>
        <fullName>Methyltransferase-like protein 19</fullName>
    </alternativeName>
</protein>
<name>TRM44_HUMAN</name>
<accession>Q8IYL2</accession>
<accession>Q8NA95</accession>
<proteinExistence type="evidence at protein level"/>
<evidence type="ECO:0000250" key="1"/>
<evidence type="ECO:0000255" key="2">
    <source>
        <dbReference type="PROSITE-ProRule" id="PRU00723"/>
    </source>
</evidence>
<evidence type="ECO:0000256" key="3">
    <source>
        <dbReference type="SAM" id="MobiDB-lite"/>
    </source>
</evidence>
<evidence type="ECO:0000269" key="4">
    <source>
    </source>
</evidence>
<evidence type="ECO:0000303" key="5">
    <source>
    </source>
</evidence>
<evidence type="ECO:0000303" key="6">
    <source>
    </source>
</evidence>
<evidence type="ECO:0000305" key="7"/>
<evidence type="ECO:0007744" key="8">
    <source>
    </source>
</evidence>
<feature type="chain" id="PRO_0000249894" description="Probable tRNA (uracil-O(2)-)-methyltransferase">
    <location>
        <begin position="1"/>
        <end position="757"/>
    </location>
</feature>
<feature type="zinc finger region" description="C3H1-type" evidence="2">
    <location>
        <begin position="713"/>
        <end position="743"/>
    </location>
</feature>
<feature type="region of interest" description="Disordered" evidence="3">
    <location>
        <begin position="55"/>
        <end position="93"/>
    </location>
</feature>
<feature type="region of interest" description="Disordered" evidence="3">
    <location>
        <begin position="108"/>
        <end position="138"/>
    </location>
</feature>
<feature type="compositionally biased region" description="Gly residues" evidence="3">
    <location>
        <begin position="72"/>
        <end position="84"/>
    </location>
</feature>
<feature type="compositionally biased region" description="Basic and acidic residues" evidence="3">
    <location>
        <begin position="123"/>
        <end position="136"/>
    </location>
</feature>
<feature type="modified residue" description="Phosphoserine" evidence="8">
    <location>
        <position position="78"/>
    </location>
</feature>
<feature type="modified residue" description="Phosphoserine" evidence="8">
    <location>
        <position position="533"/>
    </location>
</feature>
<feature type="splice variant" id="VSP_039538" description="In isoform 3." evidence="5">
    <location>
        <begin position="1"/>
        <end position="392"/>
    </location>
</feature>
<feature type="splice variant" id="VSP_020589" description="In isoform 2." evidence="6">
    <location>
        <begin position="1"/>
        <end position="241"/>
    </location>
</feature>
<feature type="splice variant" id="VSP_020590" description="In isoform 2." evidence="6">
    <original>KEEWFISVLIFCP</original>
    <variation>MCIKFSSVIAKKN</variation>
    <location>
        <begin position="242"/>
        <end position="254"/>
    </location>
</feature>
<feature type="splice variant" id="VSP_020591" description="In isoform 2." evidence="6">
    <original>ESLSLAEVAN</original>
    <variation>GKLSTILGRG</variation>
    <location>
        <begin position="643"/>
        <end position="652"/>
    </location>
</feature>
<feature type="splice variant" id="VSP_020592" description="In isoform 2." evidence="6">
    <location>
        <begin position="653"/>
        <end position="757"/>
    </location>
</feature>
<feature type="sequence variant" id="VAR_066601" description="In dbSNP:rs73211375." evidence="4">
    <original>M</original>
    <variation>L</variation>
    <location>
        <position position="300"/>
    </location>
</feature>
<feature type="sequence variant" id="VAR_027515" description="In dbSNP:rs1880024.">
    <original>R</original>
    <variation>G</variation>
    <location>
        <position position="352"/>
    </location>
</feature>
<feature type="sequence variant" id="VAR_066602" description="In dbSNP:rs34873641." evidence="4">
    <original>I</original>
    <variation>V</variation>
    <location>
        <position position="455"/>
    </location>
</feature>
<feature type="sequence variant" id="VAR_066603" description="In dbSNP:rs150441746." evidence="4">
    <original>G</original>
    <variation>A</variation>
    <location>
        <position position="641"/>
    </location>
</feature>